<gene>
    <name type="primary">IL15</name>
</gene>
<sequence>MRISKPHLRSISIQCYLCLLLNSHFLTEAGIHVFILGCFSAGLPKTEANWVNVISDLKKIEDLIQSMHIDATLYTESDVHPSCKVTAMKCFLLELQVISLESGDASIHDTVENLIILANNSLSSNGNVTESGCKECEELEEKNIKEFLQSFVHIVQMFINTS</sequence>
<dbReference type="EMBL" id="U14407">
    <property type="protein sequence ID" value="AAA21551.1"/>
    <property type="molecule type" value="mRNA"/>
</dbReference>
<dbReference type="EMBL" id="X91233">
    <property type="protein sequence ID" value="CAA62616.1"/>
    <property type="molecule type" value="Genomic_DNA"/>
</dbReference>
<dbReference type="EMBL" id="X94223">
    <property type="protein sequence ID" value="CAA63914.1"/>
    <property type="molecule type" value="mRNA"/>
</dbReference>
<dbReference type="EMBL" id="X94222">
    <property type="protein sequence ID" value="CAA63913.1"/>
    <property type="molecule type" value="mRNA"/>
</dbReference>
<dbReference type="EMBL" id="AF031167">
    <property type="protein sequence ID" value="AAB97518.1"/>
    <property type="molecule type" value="mRNA"/>
</dbReference>
<dbReference type="EMBL" id="Y09908">
    <property type="protein sequence ID" value="CAA71044.1"/>
    <property type="status" value="ALT_SEQ"/>
    <property type="molecule type" value="mRNA"/>
</dbReference>
<dbReference type="EMBL" id="AY720442">
    <property type="protein sequence ID" value="AAU21241.1"/>
    <property type="molecule type" value="mRNA"/>
</dbReference>
<dbReference type="EMBL" id="AK122993">
    <property type="protein sequence ID" value="BAG53839.1"/>
    <property type="molecule type" value="mRNA"/>
</dbReference>
<dbReference type="EMBL" id="AK290619">
    <property type="protein sequence ID" value="BAF83308.1"/>
    <property type="molecule type" value="mRNA"/>
</dbReference>
<dbReference type="EMBL" id="CR541980">
    <property type="protein sequence ID" value="CAG46777.1"/>
    <property type="molecule type" value="mRNA"/>
</dbReference>
<dbReference type="EMBL" id="CR542007">
    <property type="protein sequence ID" value="CAG46804.1"/>
    <property type="molecule type" value="mRNA"/>
</dbReference>
<dbReference type="EMBL" id="CH471056">
    <property type="protein sequence ID" value="EAX05083.1"/>
    <property type="molecule type" value="Genomic_DNA"/>
</dbReference>
<dbReference type="EMBL" id="CH471056">
    <property type="protein sequence ID" value="EAX05084.1"/>
    <property type="molecule type" value="Genomic_DNA"/>
</dbReference>
<dbReference type="EMBL" id="CH471056">
    <property type="protein sequence ID" value="EAX05085.1"/>
    <property type="molecule type" value="Genomic_DNA"/>
</dbReference>
<dbReference type="EMBL" id="CH471056">
    <property type="protein sequence ID" value="EAX05086.1"/>
    <property type="molecule type" value="Genomic_DNA"/>
</dbReference>
<dbReference type="EMBL" id="CH471056">
    <property type="protein sequence ID" value="EAX05087.1"/>
    <property type="molecule type" value="Genomic_DNA"/>
</dbReference>
<dbReference type="EMBL" id="BC018149">
    <property type="protein sequence ID" value="AAH18149.1"/>
    <property type="molecule type" value="mRNA"/>
</dbReference>
<dbReference type="EMBL" id="BC100961">
    <property type="protein sequence ID" value="AAI00962.1"/>
    <property type="molecule type" value="mRNA"/>
</dbReference>
<dbReference type="EMBL" id="BC100962">
    <property type="protein sequence ID" value="AAI00963.1"/>
    <property type="molecule type" value="mRNA"/>
</dbReference>
<dbReference type="EMBL" id="BC100963">
    <property type="protein sequence ID" value="AAI00964.1"/>
    <property type="molecule type" value="mRNA"/>
</dbReference>
<dbReference type="EMBL" id="Z38000">
    <property type="protein sequence ID" value="CAA86100.1"/>
    <property type="molecule type" value="mRNA"/>
</dbReference>
<dbReference type="CCDS" id="CCDS3755.1">
    <molecule id="P40933-1"/>
</dbReference>
<dbReference type="CCDS" id="CCDS3756.1">
    <molecule id="P40933-2"/>
</dbReference>
<dbReference type="RefSeq" id="NP_000576.1">
    <molecule id="P40933-1"/>
    <property type="nucleotide sequence ID" value="NM_000585.5"/>
</dbReference>
<dbReference type="RefSeq" id="NP_751915.1">
    <molecule id="P40933-2"/>
    <property type="nucleotide sequence ID" value="NM_172175.3"/>
</dbReference>
<dbReference type="PDB" id="2XQB">
    <property type="method" value="X-ray"/>
    <property type="resolution" value="2.60 A"/>
    <property type="chains" value="A=49-162"/>
</dbReference>
<dbReference type="PDB" id="2Z3Q">
    <property type="method" value="X-ray"/>
    <property type="resolution" value="1.85 A"/>
    <property type="chains" value="A/C=49-162"/>
</dbReference>
<dbReference type="PDB" id="2Z3R">
    <property type="method" value="X-ray"/>
    <property type="resolution" value="2.00 A"/>
    <property type="chains" value="A/C/E/G/I/K/M/O=49-162"/>
</dbReference>
<dbReference type="PDB" id="4GS7">
    <property type="method" value="X-ray"/>
    <property type="resolution" value="2.35 A"/>
    <property type="chains" value="A=49-162"/>
</dbReference>
<dbReference type="PDBsum" id="2XQB"/>
<dbReference type="PDBsum" id="2Z3Q"/>
<dbReference type="PDBsum" id="2Z3R"/>
<dbReference type="PDBsum" id="4GS7"/>
<dbReference type="SMR" id="P40933"/>
<dbReference type="BioGRID" id="109813">
    <property type="interactions" value="10"/>
</dbReference>
<dbReference type="ComplexPortal" id="CPX-627">
    <property type="entry name" value="Interleukin-15 receptor-ligand complex"/>
</dbReference>
<dbReference type="CORUM" id="P40933"/>
<dbReference type="DIP" id="DIP-3046N"/>
<dbReference type="FunCoup" id="P40933">
    <property type="interactions" value="1048"/>
</dbReference>
<dbReference type="IntAct" id="P40933">
    <property type="interactions" value="8"/>
</dbReference>
<dbReference type="STRING" id="9606.ENSP00000296545"/>
<dbReference type="BindingDB" id="P40933"/>
<dbReference type="ChEMBL" id="CHEMBL3712954"/>
<dbReference type="DrugBank" id="DB01327">
    <property type="generic name" value="Cefazolin"/>
</dbReference>
<dbReference type="GlyCosmos" id="P40933">
    <property type="glycosylation" value="1 site, No reported glycans"/>
</dbReference>
<dbReference type="GlyGen" id="P40933">
    <property type="glycosylation" value="1 site"/>
</dbReference>
<dbReference type="iPTMnet" id="P40933"/>
<dbReference type="PhosphoSitePlus" id="P40933"/>
<dbReference type="BioMuta" id="IL15"/>
<dbReference type="PaxDb" id="9606-ENSP00000296545"/>
<dbReference type="ProteomicsDB" id="55387">
    <molecule id="P40933-1"/>
</dbReference>
<dbReference type="ProteomicsDB" id="55388">
    <molecule id="P40933-2"/>
</dbReference>
<dbReference type="ABCD" id="P40933">
    <property type="antibodies" value="5 sequenced antibodies"/>
</dbReference>
<dbReference type="Antibodypedia" id="3844">
    <property type="antibodies" value="1223 antibodies from 43 providers"/>
</dbReference>
<dbReference type="DNASU" id="3600"/>
<dbReference type="Ensembl" id="ENST00000296545.11">
    <molecule id="P40933-1"/>
    <property type="protein sequence ID" value="ENSP00000296545.7"/>
    <property type="gene ID" value="ENSG00000164136.17"/>
</dbReference>
<dbReference type="Ensembl" id="ENST00000320650.9">
    <molecule id="P40933-1"/>
    <property type="protein sequence ID" value="ENSP00000323505.4"/>
    <property type="gene ID" value="ENSG00000164136.17"/>
</dbReference>
<dbReference type="Ensembl" id="ENST00000394159.2">
    <molecule id="P40933-2"/>
    <property type="protein sequence ID" value="ENSP00000377714.1"/>
    <property type="gene ID" value="ENSG00000164136.17"/>
</dbReference>
<dbReference type="Ensembl" id="ENST00000477265.5">
    <molecule id="P40933-2"/>
    <property type="protein sequence ID" value="ENSP00000436914.1"/>
    <property type="gene ID" value="ENSG00000164136.17"/>
</dbReference>
<dbReference type="Ensembl" id="ENST00000514653.5">
    <molecule id="P40933-2"/>
    <property type="protein sequence ID" value="ENSP00000422271.1"/>
    <property type="gene ID" value="ENSG00000164136.17"/>
</dbReference>
<dbReference type="Ensembl" id="ENST00000529613.5">
    <molecule id="P40933-1"/>
    <property type="protein sequence ID" value="ENSP00000435462.1"/>
    <property type="gene ID" value="ENSG00000164136.17"/>
</dbReference>
<dbReference type="GeneID" id="3600"/>
<dbReference type="KEGG" id="hsa:3600"/>
<dbReference type="MANE-Select" id="ENST00000320650.9">
    <property type="protein sequence ID" value="ENSP00000323505.4"/>
    <property type="RefSeq nucleotide sequence ID" value="NM_000585.5"/>
    <property type="RefSeq protein sequence ID" value="NP_000576.1"/>
</dbReference>
<dbReference type="UCSC" id="uc003iis.4">
    <molecule id="P40933-1"/>
    <property type="organism name" value="human"/>
</dbReference>
<dbReference type="AGR" id="HGNC:5977"/>
<dbReference type="CTD" id="3600"/>
<dbReference type="DisGeNET" id="3600"/>
<dbReference type="GeneCards" id="IL15"/>
<dbReference type="HGNC" id="HGNC:5977">
    <property type="gene designation" value="IL15"/>
</dbReference>
<dbReference type="HPA" id="ENSG00000164136">
    <property type="expression patterns" value="Low tissue specificity"/>
</dbReference>
<dbReference type="MIM" id="600554">
    <property type="type" value="gene"/>
</dbReference>
<dbReference type="neXtProt" id="NX_P40933"/>
<dbReference type="OpenTargets" id="ENSG00000164136"/>
<dbReference type="PharmGKB" id="PA29790"/>
<dbReference type="VEuPathDB" id="HostDB:ENSG00000164136"/>
<dbReference type="eggNOG" id="ENOG502SCMF">
    <property type="taxonomic scope" value="Eukaryota"/>
</dbReference>
<dbReference type="GeneTree" id="ENSGT00390000016264"/>
<dbReference type="HOGENOM" id="CLU_135111_0_0_1"/>
<dbReference type="InParanoid" id="P40933"/>
<dbReference type="OMA" id="FVWGCIS"/>
<dbReference type="OrthoDB" id="8905762at2759"/>
<dbReference type="PAN-GO" id="P40933">
    <property type="GO annotations" value="7 GO annotations based on evolutionary models"/>
</dbReference>
<dbReference type="PhylomeDB" id="P40933"/>
<dbReference type="TreeFam" id="TF336199"/>
<dbReference type="PathwayCommons" id="P40933"/>
<dbReference type="Reactome" id="R-HSA-8983432">
    <property type="pathway name" value="Interleukin-15 signaling"/>
</dbReference>
<dbReference type="SignaLink" id="P40933"/>
<dbReference type="SIGNOR" id="P40933"/>
<dbReference type="BioGRID-ORCS" id="3600">
    <property type="hits" value="6 hits in 1115 CRISPR screens"/>
</dbReference>
<dbReference type="ChiTaRS" id="IL15">
    <property type="organism name" value="human"/>
</dbReference>
<dbReference type="EvolutionaryTrace" id="P40933"/>
<dbReference type="GeneWiki" id="Interleukin_15"/>
<dbReference type="GenomeRNAi" id="3600"/>
<dbReference type="Pharos" id="P40933">
    <property type="development level" value="Tchem"/>
</dbReference>
<dbReference type="PRO" id="PR:P40933"/>
<dbReference type="Proteomes" id="UP000005640">
    <property type="component" value="Chromosome 4"/>
</dbReference>
<dbReference type="RNAct" id="P40933">
    <property type="molecule type" value="protein"/>
</dbReference>
<dbReference type="Bgee" id="ENSG00000164136">
    <property type="expression patterns" value="Expressed in decidua and 152 other cell types or tissues"/>
</dbReference>
<dbReference type="GO" id="GO:0005737">
    <property type="term" value="C:cytoplasm"/>
    <property type="evidence" value="ECO:0000304"/>
    <property type="project" value="ProtInc"/>
</dbReference>
<dbReference type="GO" id="GO:0005829">
    <property type="term" value="C:cytosol"/>
    <property type="evidence" value="ECO:0000314"/>
    <property type="project" value="HPA"/>
</dbReference>
<dbReference type="GO" id="GO:0005768">
    <property type="term" value="C:endosome"/>
    <property type="evidence" value="ECO:0000304"/>
    <property type="project" value="Reactome"/>
</dbReference>
<dbReference type="GO" id="GO:0005576">
    <property type="term" value="C:extracellular region"/>
    <property type="evidence" value="ECO:0000304"/>
    <property type="project" value="Reactome"/>
</dbReference>
<dbReference type="GO" id="GO:0005615">
    <property type="term" value="C:extracellular space"/>
    <property type="evidence" value="ECO:0000314"/>
    <property type="project" value="UniProt"/>
</dbReference>
<dbReference type="GO" id="GO:0005794">
    <property type="term" value="C:Golgi apparatus"/>
    <property type="evidence" value="ECO:0000304"/>
    <property type="project" value="ProtInc"/>
</dbReference>
<dbReference type="GO" id="GO:0016607">
    <property type="term" value="C:nuclear speck"/>
    <property type="evidence" value="ECO:0000314"/>
    <property type="project" value="HPA"/>
</dbReference>
<dbReference type="GO" id="GO:0005654">
    <property type="term" value="C:nucleoplasm"/>
    <property type="evidence" value="ECO:0000314"/>
    <property type="project" value="HPA"/>
</dbReference>
<dbReference type="GO" id="GO:0005125">
    <property type="term" value="F:cytokine activity"/>
    <property type="evidence" value="ECO:0000314"/>
    <property type="project" value="UniProt"/>
</dbReference>
<dbReference type="GO" id="GO:0005126">
    <property type="term" value="F:cytokine receptor binding"/>
    <property type="evidence" value="ECO:0007669"/>
    <property type="project" value="InterPro"/>
</dbReference>
<dbReference type="GO" id="GO:0048469">
    <property type="term" value="P:cell maturation"/>
    <property type="evidence" value="ECO:0007669"/>
    <property type="project" value="Ensembl"/>
</dbReference>
<dbReference type="GO" id="GO:0007267">
    <property type="term" value="P:cell-cell signaling"/>
    <property type="evidence" value="ECO:0000304"/>
    <property type="project" value="ProtInc"/>
</dbReference>
<dbReference type="GO" id="GO:0045062">
    <property type="term" value="P:extrathymic T cell selection"/>
    <property type="evidence" value="ECO:0007669"/>
    <property type="project" value="Ensembl"/>
</dbReference>
<dbReference type="GO" id="GO:0006955">
    <property type="term" value="P:immune response"/>
    <property type="evidence" value="ECO:0000304"/>
    <property type="project" value="ProtInc"/>
</dbReference>
<dbReference type="GO" id="GO:0035723">
    <property type="term" value="P:interleukin-15-mediated signaling pathway"/>
    <property type="evidence" value="ECO:0000314"/>
    <property type="project" value="UniProtKB"/>
</dbReference>
<dbReference type="GO" id="GO:0048535">
    <property type="term" value="P:lymph node development"/>
    <property type="evidence" value="ECO:0007669"/>
    <property type="project" value="Ensembl"/>
</dbReference>
<dbReference type="GO" id="GO:0030225">
    <property type="term" value="P:macrophage differentiation"/>
    <property type="evidence" value="ECO:0000314"/>
    <property type="project" value="ARUK-UCL"/>
</dbReference>
<dbReference type="GO" id="GO:0001779">
    <property type="term" value="P:natural killer cell differentiation"/>
    <property type="evidence" value="ECO:0007669"/>
    <property type="project" value="Ensembl"/>
</dbReference>
<dbReference type="GO" id="GO:0001787">
    <property type="term" value="P:natural killer cell proliferation"/>
    <property type="evidence" value="ECO:0007669"/>
    <property type="project" value="Ensembl"/>
</dbReference>
<dbReference type="GO" id="GO:0120163">
    <property type="term" value="P:negative regulation of cold-induced thermogenesis"/>
    <property type="evidence" value="ECO:0000250"/>
    <property type="project" value="YuBioLab"/>
</dbReference>
<dbReference type="GO" id="GO:0042119">
    <property type="term" value="P:neutrophil activation"/>
    <property type="evidence" value="ECO:0000314"/>
    <property type="project" value="UniProtKB"/>
</dbReference>
<dbReference type="GO" id="GO:0001866">
    <property type="term" value="P:NK T cell proliferation"/>
    <property type="evidence" value="ECO:0007669"/>
    <property type="project" value="Ensembl"/>
</dbReference>
<dbReference type="GO" id="GO:0008284">
    <property type="term" value="P:positive regulation of cell population proliferation"/>
    <property type="evidence" value="ECO:0000304"/>
    <property type="project" value="ProtInc"/>
</dbReference>
<dbReference type="GO" id="GO:0001819">
    <property type="term" value="P:positive regulation of cytokine production"/>
    <property type="evidence" value="ECO:0000318"/>
    <property type="project" value="GO_Central"/>
</dbReference>
<dbReference type="GO" id="GO:0050778">
    <property type="term" value="P:positive regulation of immune response"/>
    <property type="evidence" value="ECO:0000318"/>
    <property type="project" value="GO_Central"/>
</dbReference>
<dbReference type="GO" id="GO:0050729">
    <property type="term" value="P:positive regulation of inflammatory response"/>
    <property type="evidence" value="ECO:0000305"/>
    <property type="project" value="BHF-UCL"/>
</dbReference>
<dbReference type="GO" id="GO:0032740">
    <property type="term" value="P:positive regulation of interleukin-17 production"/>
    <property type="evidence" value="ECO:0000314"/>
    <property type="project" value="BHF-UCL"/>
</dbReference>
<dbReference type="GO" id="GO:0032825">
    <property type="term" value="P:positive regulation of natural killer cell differentiation"/>
    <property type="evidence" value="ECO:0007669"/>
    <property type="project" value="Ensembl"/>
</dbReference>
<dbReference type="GO" id="GO:0032819">
    <property type="term" value="P:positive regulation of natural killer cell proliferation"/>
    <property type="evidence" value="ECO:0007669"/>
    <property type="project" value="Ensembl"/>
</dbReference>
<dbReference type="GO" id="GO:0050731">
    <property type="term" value="P:positive regulation of peptidyl-tyrosine phosphorylation"/>
    <property type="evidence" value="ECO:0000314"/>
    <property type="project" value="UniProtKB"/>
</dbReference>
<dbReference type="GO" id="GO:0050766">
    <property type="term" value="P:positive regulation of phagocytosis"/>
    <property type="evidence" value="ECO:0000314"/>
    <property type="project" value="UniProtKB"/>
</dbReference>
<dbReference type="GO" id="GO:0042102">
    <property type="term" value="P:positive regulation of T cell proliferation"/>
    <property type="evidence" value="ECO:0000318"/>
    <property type="project" value="GO_Central"/>
</dbReference>
<dbReference type="GO" id="GO:0034105">
    <property type="term" value="P:positive regulation of tissue remodeling"/>
    <property type="evidence" value="ECO:0000305"/>
    <property type="project" value="BHF-UCL"/>
</dbReference>
<dbReference type="GO" id="GO:0050691">
    <property type="term" value="P:regulation of defense response to virus by host"/>
    <property type="evidence" value="ECO:0007669"/>
    <property type="project" value="Ensembl"/>
</dbReference>
<dbReference type="GO" id="GO:0045580">
    <property type="term" value="P:regulation of T cell differentiation"/>
    <property type="evidence" value="ECO:0007669"/>
    <property type="project" value="Ensembl"/>
</dbReference>
<dbReference type="GO" id="GO:0007165">
    <property type="term" value="P:signal transduction"/>
    <property type="evidence" value="ECO:0000304"/>
    <property type="project" value="ProtInc"/>
</dbReference>
<dbReference type="GO" id="GO:0007260">
    <property type="term" value="P:tyrosine phosphorylation of STAT protein"/>
    <property type="evidence" value="ECO:0000314"/>
    <property type="project" value="CACAO"/>
</dbReference>
<dbReference type="FunFam" id="1.20.1250.70:FF:000001">
    <property type="entry name" value="Interleukin"/>
    <property type="match status" value="1"/>
</dbReference>
<dbReference type="Gene3D" id="1.20.1250.70">
    <property type="entry name" value="Interleukin-15/Interleukin-21"/>
    <property type="match status" value="1"/>
</dbReference>
<dbReference type="InterPro" id="IPR009079">
    <property type="entry name" value="4_helix_cytokine-like_core"/>
</dbReference>
<dbReference type="InterPro" id="IPR020439">
    <property type="entry name" value="IL-15"/>
</dbReference>
<dbReference type="InterPro" id="IPR003443">
    <property type="entry name" value="IL-15/IL-21_fam"/>
</dbReference>
<dbReference type="InterPro" id="IPR020466">
    <property type="entry name" value="IL-15_mml"/>
</dbReference>
<dbReference type="PANTHER" id="PTHR14356:SF3">
    <property type="entry name" value="INTERLEUKIN-15"/>
    <property type="match status" value="1"/>
</dbReference>
<dbReference type="PANTHER" id="PTHR14356">
    <property type="entry name" value="INTERLEUKIN-15-RELATED"/>
    <property type="match status" value="1"/>
</dbReference>
<dbReference type="Pfam" id="PF02372">
    <property type="entry name" value="IL15"/>
    <property type="match status" value="1"/>
</dbReference>
<dbReference type="PRINTS" id="PR01947">
    <property type="entry name" value="INTLKN15MAML"/>
</dbReference>
<dbReference type="PRINTS" id="PR01930">
    <property type="entry name" value="INTRLEUKIN15"/>
</dbReference>
<dbReference type="SUPFAM" id="SSF47266">
    <property type="entry name" value="4-helical cytokines"/>
    <property type="match status" value="1"/>
</dbReference>
<organism>
    <name type="scientific">Homo sapiens</name>
    <name type="common">Human</name>
    <dbReference type="NCBI Taxonomy" id="9606"/>
    <lineage>
        <taxon>Eukaryota</taxon>
        <taxon>Metazoa</taxon>
        <taxon>Chordata</taxon>
        <taxon>Craniata</taxon>
        <taxon>Vertebrata</taxon>
        <taxon>Euteleostomi</taxon>
        <taxon>Mammalia</taxon>
        <taxon>Eutheria</taxon>
        <taxon>Euarchontoglires</taxon>
        <taxon>Primates</taxon>
        <taxon>Haplorrhini</taxon>
        <taxon>Catarrhini</taxon>
        <taxon>Hominidae</taxon>
        <taxon>Homo</taxon>
    </lineage>
</organism>
<accession>P40933</accession>
<accession>D3DNZ2</accession>
<accession>O00440</accession>
<accession>O43512</accession>
<accession>Q495Z8</accession>
<accession>Q6FGX7</accession>
<accession>Q93058</accession>
<accession>Q9UBA3</accession>
<keyword id="KW-0002">3D-structure</keyword>
<keyword id="KW-0025">Alternative splicing</keyword>
<keyword id="KW-0202">Cytokine</keyword>
<keyword id="KW-0963">Cytoplasm</keyword>
<keyword id="KW-1015">Disulfide bond</keyword>
<keyword id="KW-0325">Glycoprotein</keyword>
<keyword id="KW-0539">Nucleus</keyword>
<keyword id="KW-1185">Reference proteome</keyword>
<keyword id="KW-0964">Secreted</keyword>
<keyword id="KW-0732">Signal</keyword>
<reference key="1">
    <citation type="journal article" date="1994" name="Science">
        <title>Cloning of a T cell growth factor that interacts with the beta chain of the interleukin-2 receptor.</title>
        <authorList>
            <person name="Grabstein K.H."/>
            <person name="Eisenman J."/>
            <person name="Shanebeck K."/>
            <person name="Rauch C."/>
            <person name="Srinivasan S."/>
            <person name="Fung V."/>
            <person name="Beers C."/>
            <person name="Richardson J."/>
            <person name="Schoenborn M.A."/>
            <person name="Ahdieh M."/>
            <person name="Johnson L."/>
            <person name="Alderson M.R."/>
            <person name="Watson J.D."/>
            <person name="Anderson D.M."/>
            <person name="Giri J.G."/>
        </authorList>
    </citation>
    <scope>NUCLEOTIDE SEQUENCE [MRNA] (ISOFORM IL15-S48AA)</scope>
    <scope>FUNCTION</scope>
    <source>
        <tissue>Bone marrow</tissue>
    </source>
</reference>
<reference key="2">
    <citation type="journal article" date="1996" name="Cytokine">
        <title>Genomic sequence and chromosomal location of the human interleukin-15 gene (IL15).</title>
        <authorList>
            <person name="Krause H."/>
            <person name="Jandrig B."/>
            <person name="Wernicke C."/>
            <person name="Bulfone-Paus S."/>
            <person name="Pohl T."/>
            <person name="Diamantstein T."/>
        </authorList>
    </citation>
    <scope>NUCLEOTIDE SEQUENCE [GENOMIC DNA]</scope>
</reference>
<reference key="3">
    <citation type="journal article" date="1996" name="Oncogene">
        <title>Identification of a novel interleukin-15 (IL-15) transcript isoform generated by alternative splicing in human small cell lung cancer cell lines.</title>
        <authorList>
            <person name="Meazza R."/>
            <person name="Verdiani S."/>
            <person name="Biassoni R."/>
            <person name="Coppolecchia M."/>
            <person name="Gaggero A."/>
            <person name="Orengo A.M."/>
            <person name="Colombo M.P."/>
            <person name="Azzarone B."/>
            <person name="Ferrini S."/>
        </authorList>
    </citation>
    <scope>NUCLEOTIDE SEQUENCE [MRNA] (ISOFORM IL15-S21AA)</scope>
    <source>
        <tissue>Lung cancer</tissue>
    </source>
</reference>
<reference key="4">
    <citation type="journal article" date="1997" name="Proc. Natl. Acad. Sci. U.S.A.">
        <title>Generation of secretable and nonsecretable interleukin 15 isoforms through alternate usage of signal peptides.</title>
        <authorList>
            <person name="Tagaya Y."/>
            <person name="Kurys G."/>
            <person name="Thies T.A."/>
            <person name="Losi J.M."/>
            <person name="Azimi N."/>
            <person name="Hanover J.A."/>
            <person name="Bamford R.N."/>
            <person name="Waldmann T.A."/>
        </authorList>
    </citation>
    <scope>NUCLEOTIDE SEQUENCE [MRNA] (ISOFORM IL15-S21AA)</scope>
    <source>
        <tissue>Testis</tissue>
    </source>
</reference>
<reference key="5">
    <citation type="submission" date="1997-04" db="EMBL/GenBank/DDBJ databases">
        <title>Expression of two IL-15 mRNA isoforms in human tumors does not correlate with secretion: role of different signal peptides.</title>
        <authorList>
            <person name="Meazza R."/>
            <person name="Ferrini S."/>
        </authorList>
    </citation>
    <scope>NUCLEOTIDE SEQUENCE [MRNA]</scope>
</reference>
<reference key="6">
    <citation type="submission" date="2004-08" db="EMBL/GenBank/DDBJ databases">
        <authorList>
            <person name="Li C."/>
        </authorList>
    </citation>
    <scope>NUCLEOTIDE SEQUENCE [MRNA] (ISOFORM IL15-S21AA)</scope>
</reference>
<reference key="7">
    <citation type="journal article" date="2004" name="Nat. Genet.">
        <title>Complete sequencing and characterization of 21,243 full-length human cDNAs.</title>
        <authorList>
            <person name="Ota T."/>
            <person name="Suzuki Y."/>
            <person name="Nishikawa T."/>
            <person name="Otsuki T."/>
            <person name="Sugiyama T."/>
            <person name="Irie R."/>
            <person name="Wakamatsu A."/>
            <person name="Hayashi K."/>
            <person name="Sato H."/>
            <person name="Nagai K."/>
            <person name="Kimura K."/>
            <person name="Makita H."/>
            <person name="Sekine M."/>
            <person name="Obayashi M."/>
            <person name="Nishi T."/>
            <person name="Shibahara T."/>
            <person name="Tanaka T."/>
            <person name="Ishii S."/>
            <person name="Yamamoto J."/>
            <person name="Saito K."/>
            <person name="Kawai Y."/>
            <person name="Isono Y."/>
            <person name="Nakamura Y."/>
            <person name="Nagahari K."/>
            <person name="Murakami K."/>
            <person name="Yasuda T."/>
            <person name="Iwayanagi T."/>
            <person name="Wagatsuma M."/>
            <person name="Shiratori A."/>
            <person name="Sudo H."/>
            <person name="Hosoiri T."/>
            <person name="Kaku Y."/>
            <person name="Kodaira H."/>
            <person name="Kondo H."/>
            <person name="Sugawara M."/>
            <person name="Takahashi M."/>
            <person name="Kanda K."/>
            <person name="Yokoi T."/>
            <person name="Furuya T."/>
            <person name="Kikkawa E."/>
            <person name="Omura Y."/>
            <person name="Abe K."/>
            <person name="Kamihara K."/>
            <person name="Katsuta N."/>
            <person name="Sato K."/>
            <person name="Tanikawa M."/>
            <person name="Yamazaki M."/>
            <person name="Ninomiya K."/>
            <person name="Ishibashi T."/>
            <person name="Yamashita H."/>
            <person name="Murakawa K."/>
            <person name="Fujimori K."/>
            <person name="Tanai H."/>
            <person name="Kimata M."/>
            <person name="Watanabe M."/>
            <person name="Hiraoka S."/>
            <person name="Chiba Y."/>
            <person name="Ishida S."/>
            <person name="Ono Y."/>
            <person name="Takiguchi S."/>
            <person name="Watanabe S."/>
            <person name="Yosida M."/>
            <person name="Hotuta T."/>
            <person name="Kusano J."/>
            <person name="Kanehori K."/>
            <person name="Takahashi-Fujii A."/>
            <person name="Hara H."/>
            <person name="Tanase T.-O."/>
            <person name="Nomura Y."/>
            <person name="Togiya S."/>
            <person name="Komai F."/>
            <person name="Hara R."/>
            <person name="Takeuchi K."/>
            <person name="Arita M."/>
            <person name="Imose N."/>
            <person name="Musashino K."/>
            <person name="Yuuki H."/>
            <person name="Oshima A."/>
            <person name="Sasaki N."/>
            <person name="Aotsuka S."/>
            <person name="Yoshikawa Y."/>
            <person name="Matsunawa H."/>
            <person name="Ichihara T."/>
            <person name="Shiohata N."/>
            <person name="Sano S."/>
            <person name="Moriya S."/>
            <person name="Momiyama H."/>
            <person name="Satoh N."/>
            <person name="Takami S."/>
            <person name="Terashima Y."/>
            <person name="Suzuki O."/>
            <person name="Nakagawa S."/>
            <person name="Senoh A."/>
            <person name="Mizoguchi H."/>
            <person name="Goto Y."/>
            <person name="Shimizu F."/>
            <person name="Wakebe H."/>
            <person name="Hishigaki H."/>
            <person name="Watanabe T."/>
            <person name="Sugiyama A."/>
            <person name="Takemoto M."/>
            <person name="Kawakami B."/>
            <person name="Yamazaki M."/>
            <person name="Watanabe K."/>
            <person name="Kumagai A."/>
            <person name="Itakura S."/>
            <person name="Fukuzumi Y."/>
            <person name="Fujimori Y."/>
            <person name="Komiyama M."/>
            <person name="Tashiro H."/>
            <person name="Tanigami A."/>
            <person name="Fujiwara T."/>
            <person name="Ono T."/>
            <person name="Yamada K."/>
            <person name="Fujii Y."/>
            <person name="Ozaki K."/>
            <person name="Hirao M."/>
            <person name="Ohmori Y."/>
            <person name="Kawabata A."/>
            <person name="Hikiji T."/>
            <person name="Kobatake N."/>
            <person name="Inagaki H."/>
            <person name="Ikema Y."/>
            <person name="Okamoto S."/>
            <person name="Okitani R."/>
            <person name="Kawakami T."/>
            <person name="Noguchi S."/>
            <person name="Itoh T."/>
            <person name="Shigeta K."/>
            <person name="Senba T."/>
            <person name="Matsumura K."/>
            <person name="Nakajima Y."/>
            <person name="Mizuno T."/>
            <person name="Morinaga M."/>
            <person name="Sasaki M."/>
            <person name="Togashi T."/>
            <person name="Oyama M."/>
            <person name="Hata H."/>
            <person name="Watanabe M."/>
            <person name="Komatsu T."/>
            <person name="Mizushima-Sugano J."/>
            <person name="Satoh T."/>
            <person name="Shirai Y."/>
            <person name="Takahashi Y."/>
            <person name="Nakagawa K."/>
            <person name="Okumura K."/>
            <person name="Nagase T."/>
            <person name="Nomura N."/>
            <person name="Kikuchi H."/>
            <person name="Masuho Y."/>
            <person name="Yamashita R."/>
            <person name="Nakai K."/>
            <person name="Yada T."/>
            <person name="Nakamura Y."/>
            <person name="Ohara O."/>
            <person name="Isogai T."/>
            <person name="Sugano S."/>
        </authorList>
    </citation>
    <scope>NUCLEOTIDE SEQUENCE [LARGE SCALE MRNA] (ISOFORM IL15-S21AA)</scope>
    <source>
        <tissue>Cerebellum</tissue>
        <tissue>Heart</tissue>
    </source>
</reference>
<reference key="8">
    <citation type="submission" date="2004-06" db="EMBL/GenBank/DDBJ databases">
        <title>Cloning of human full open reading frames in Gateway(TM) system entry vector (pDONR201).</title>
        <authorList>
            <person name="Ebert L."/>
            <person name="Schick M."/>
            <person name="Neubert P."/>
            <person name="Schatten R."/>
            <person name="Henze S."/>
            <person name="Korn B."/>
        </authorList>
    </citation>
    <scope>NUCLEOTIDE SEQUENCE [LARGE SCALE MRNA] (ISOFORM IL15-S21AA)</scope>
</reference>
<reference key="9">
    <citation type="submission" date="2005-09" db="EMBL/GenBank/DDBJ databases">
        <authorList>
            <person name="Mural R.J."/>
            <person name="Istrail S."/>
            <person name="Sutton G.G."/>
            <person name="Florea L."/>
            <person name="Halpern A.L."/>
            <person name="Mobarry C.M."/>
            <person name="Lippert R."/>
            <person name="Walenz B."/>
            <person name="Shatkay H."/>
            <person name="Dew I."/>
            <person name="Miller J.R."/>
            <person name="Flanigan M.J."/>
            <person name="Edwards N.J."/>
            <person name="Bolanos R."/>
            <person name="Fasulo D."/>
            <person name="Halldorsson B.V."/>
            <person name="Hannenhalli S."/>
            <person name="Turner R."/>
            <person name="Yooseph S."/>
            <person name="Lu F."/>
            <person name="Nusskern D.R."/>
            <person name="Shue B.C."/>
            <person name="Zheng X.H."/>
            <person name="Zhong F."/>
            <person name="Delcher A.L."/>
            <person name="Huson D.H."/>
            <person name="Kravitz S.A."/>
            <person name="Mouchard L."/>
            <person name="Reinert K."/>
            <person name="Remington K.A."/>
            <person name="Clark A.G."/>
            <person name="Waterman M.S."/>
            <person name="Eichler E.E."/>
            <person name="Adams M.D."/>
            <person name="Hunkapiller M.W."/>
            <person name="Myers E.W."/>
            <person name="Venter J.C."/>
        </authorList>
    </citation>
    <scope>NUCLEOTIDE SEQUENCE [LARGE SCALE GENOMIC DNA]</scope>
</reference>
<reference key="10">
    <citation type="journal article" date="2004" name="Genome Res.">
        <title>The status, quality, and expansion of the NIH full-length cDNA project: the Mammalian Gene Collection (MGC).</title>
        <authorList>
            <consortium name="The MGC Project Team"/>
        </authorList>
    </citation>
    <scope>NUCLEOTIDE SEQUENCE [LARGE SCALE MRNA] (ISOFORMS IL15-S48AA AND IL15-S21AA)</scope>
    <source>
        <tissue>Colon</tissue>
    </source>
</reference>
<reference key="11">
    <citation type="submission" date="1994-10" db="EMBL/GenBank/DDBJ databases">
        <title>IL15 expression in human keratinocytes.</title>
        <authorList>
            <person name="Sorel M.A."/>
            <person name="Jacques Y."/>
        </authorList>
    </citation>
    <scope>NUCLEOTIDE SEQUENCE [MRNA] OF 49-162</scope>
    <source>
        <tissue>Epidermis</tissue>
    </source>
</reference>
<reference key="12">
    <citation type="journal article" date="1994" name="EMBO J.">
        <title>Utilization of the beta and gamma chains of the IL-2 receptor by the novel cytokine IL-15.</title>
        <authorList>
            <person name="Giri J.G."/>
            <person name="Ahdieh M."/>
            <person name="Eisenman J."/>
            <person name="Shanebeck K."/>
            <person name="Grabstein K."/>
            <person name="Kumaki S."/>
            <person name="Namen A."/>
            <person name="Park L.S."/>
            <person name="Cosman D."/>
            <person name="Anderson D."/>
        </authorList>
    </citation>
    <scope>FUNCTION</scope>
</reference>
<reference key="13">
    <citation type="journal article" date="1995" name="Proc. Natl. Acad. Sci. U.S.A.">
        <title>Tyrosine phosphorylation and activation of STAT5, STAT3, and Janus kinases by interleukins 2 and 15.</title>
        <authorList>
            <person name="Johnston J.A."/>
            <person name="Bacon C.M."/>
            <person name="Finbloom D.S."/>
            <person name="Rees R.C."/>
            <person name="Kaplan D."/>
            <person name="Shibuya K."/>
            <person name="Ortaldo J.R."/>
            <person name="Gupta S."/>
            <person name="Chen Y.Q."/>
            <person name="Giri J.D."/>
        </authorList>
    </citation>
    <scope>FUNCTION</scope>
</reference>
<reference key="14">
    <citation type="journal article" date="1997" name="Blood">
        <title>Interleukin-15 (IL-15) induces IL-8 and monocyte chemotactic protein 1 production in human monocytes.</title>
        <authorList>
            <person name="Badolato R."/>
            <person name="Ponzi A.N."/>
            <person name="Millesimo M."/>
            <person name="Notarangelo L.D."/>
            <person name="Musso T."/>
        </authorList>
    </citation>
    <scope>FUNCTION</scope>
</reference>
<reference key="15">
    <citation type="journal article" date="1999" name="Blood">
        <title>Human monocytes constitutively express membrane-bound, biologically active, and interferon-gamma-upregulated interleukin-15.</title>
        <authorList>
            <person name="Musso T."/>
            <person name="Calosso L."/>
            <person name="Zucca M."/>
            <person name="Millesimo M."/>
            <person name="Ravarino D."/>
            <person name="Giovarelli M."/>
            <person name="Malavasi F."/>
            <person name="Ponzi A.N."/>
            <person name="Paus R."/>
            <person name="Bulfone-Paus S."/>
        </authorList>
    </citation>
    <scope>FUNCTION</scope>
    <scope>INDUCTION BY INTERFERON-GAMMA</scope>
</reference>
<reference key="16">
    <citation type="journal article" date="2004" name="J. Leukoc. Biol.">
        <title>Interleukin-15 enhances human neutrophil phagocytosis by a Syk-dependent mechanism: importance of the IL-15Ralpha chain.</title>
        <authorList>
            <person name="Ratthe C."/>
            <person name="Girard D."/>
        </authorList>
    </citation>
    <scope>FUNCTION</scope>
</reference>
<reference key="17">
    <citation type="journal article" date="2011" name="J. Mol. Biol.">
        <title>Engineering a high-affinity anti-IL-15 antibody: crystal structure reveals an alpha-helix in VH CDR3 as key component of paratope.</title>
        <authorList>
            <person name="Lowe D.C."/>
            <person name="Gerhardt S."/>
            <person name="Ward A."/>
            <person name="Hargreaves D."/>
            <person name="Anderson M."/>
            <person name="Ferraro F."/>
            <person name="Pauptit R.A."/>
            <person name="Pattison D.V."/>
            <person name="Buchanan C."/>
            <person name="Popovic B."/>
            <person name="Finch D.K."/>
            <person name="Wilkinson T."/>
            <person name="Sleeman M."/>
            <person name="Vaughan T.J."/>
            <person name="Mallinder P.R."/>
        </authorList>
    </citation>
    <scope>X-RAY CRYSTALLOGRAPHY (2.6 ANGSTROMS) OF 49-162 IN COMPLEX WITH ANTIBODY</scope>
    <scope>DISULFIDE BONDS</scope>
</reference>
<reference evidence="18" key="18">
    <citation type="journal article" date="2012" name="J. Immunol.">
        <title>Mechanistic and structural insight into the functional dichotomy between IL-2 and IL-15.</title>
        <authorList>
            <person name="Ring A.M."/>
            <person name="Lin J.X."/>
            <person name="Feng D."/>
            <person name="Mitra S."/>
            <person name="Rickert M."/>
            <person name="Bowman G.R."/>
            <person name="Pande V.S."/>
            <person name="Li P."/>
            <person name="Moraga I."/>
            <person name="Spolski R."/>
            <person name="Ozkan E."/>
            <person name="Leonard W.J."/>
            <person name="Garcia K.C."/>
        </authorList>
    </citation>
    <scope>X-RAY CRYSTALLOGRAPHY (2.35 ANGSTROMS) OF 49-162</scope>
    <scope>DISULFIDE BONDS</scope>
    <scope>FUNCTION</scope>
</reference>
<name>IL15_HUMAN</name>
<protein>
    <recommendedName>
        <fullName>Interleukin-15</fullName>
        <shortName>IL-15</shortName>
    </recommendedName>
</protein>
<feature type="signal peptide" evidence="2">
    <location>
        <begin position="1"/>
        <end position="29"/>
    </location>
</feature>
<feature type="propeptide" id="PRO_0000015393" evidence="2">
    <location>
        <begin position="30"/>
        <end position="48"/>
    </location>
</feature>
<feature type="chain" id="PRO_0000015394" description="Interleukin-15">
    <location>
        <begin position="49"/>
        <end position="162"/>
    </location>
</feature>
<feature type="glycosylation site" description="N-linked (GlcNAc...) asparagine" evidence="2">
    <location>
        <position position="127"/>
    </location>
</feature>
<feature type="disulfide bond" evidence="5 6">
    <location>
        <begin position="83"/>
        <end position="133"/>
    </location>
</feature>
<feature type="disulfide bond" evidence="5 6">
    <location>
        <begin position="90"/>
        <end position="136"/>
    </location>
</feature>
<feature type="splice variant" id="VSP_002660" description="In isoform IL15-S21AA." evidence="11 12 13 14 15 16">
    <original>MRISKPHLRSISIQCYLCLLLNSHFLTEAGIHVFILG</original>
    <variation>MVLGTIDLCS</variation>
    <location>
        <begin position="1"/>
        <end position="37"/>
    </location>
</feature>
<feature type="sequence conflict" description="In Ref. 4; AAB97518." evidence="17" ref="4">
    <original>E</original>
    <variation>K</variation>
    <location>
        <position position="141"/>
    </location>
</feature>
<feature type="helix" evidence="19">
    <location>
        <begin position="49"/>
        <end position="64"/>
    </location>
</feature>
<feature type="strand" evidence="19">
    <location>
        <begin position="73"/>
        <end position="75"/>
    </location>
</feature>
<feature type="helix" evidence="19">
    <location>
        <begin position="81"/>
        <end position="83"/>
    </location>
</feature>
<feature type="helix" evidence="19">
    <location>
        <begin position="84"/>
        <end position="102"/>
    </location>
</feature>
<feature type="helix" evidence="19">
    <location>
        <begin position="105"/>
        <end position="119"/>
    </location>
</feature>
<feature type="helix" evidence="19">
    <location>
        <begin position="136"/>
        <end position="138"/>
    </location>
</feature>
<feature type="strand" evidence="19">
    <location>
        <begin position="139"/>
        <end position="142"/>
    </location>
</feature>
<feature type="helix" evidence="19">
    <location>
        <begin position="144"/>
        <end position="158"/>
    </location>
</feature>
<comment type="function">
    <text evidence="1 3 4 6 7 8 9 10">Cytokine that plays a major role in the development of inflammatory and protective immune responses to microbial invaders and parasites by modulating immune cells of both the innate and adaptive immune systems (PubMed:15123770). Stimulates the proliferation of natural killer cells, T-cells and B-cells and promotes the secretion of several cytokines (PubMed:8178155, PubMed:9326248). In monocytes, induces the production of IL8 and monocyte chemotactic protein 1/CCL2, two chemokines that attract neutrophils and monocytes respectively to sites of infection (PubMed:9326248). Unlike most cytokines, which are secreted in soluble form, IL15 is expressed in association with its high affinity IL15RA on the surface of IL15-producing cells and delivers signals to target cells that express IL2RB and IL2RG receptor subunits (PubMed:10233906, PubMed:23104097, PubMed:8026467). Binding to its receptor triggers the phosphorylation of JAK1 and JAK3 and the recruitment and subsequent phosphorylation of signal transducer and activator of transcription-3/STAT3 and STAT5 (PubMed:7568001). In mast cells, induces the rapid tyrosine phosphorylation of STAT6 and thereby controls mast cell survival and release of cytokines such as IL4 (By similarity).</text>
</comment>
<comment type="interaction">
    <interactant intactId="EBI-980274">
        <id>P40933</id>
    </interactant>
    <interactant intactId="EBI-980354">
        <id>Q13261</id>
        <label>IL15RA</label>
    </interactant>
    <organismsDiffer>false</organismsDiffer>
    <experiments>5</experiments>
</comment>
<comment type="interaction">
    <interactant intactId="EBI-980274">
        <id>P40933</id>
    </interactant>
    <interactant intactId="EBI-2866779">
        <id>P14784</id>
        <label>IL2RB</label>
    </interactant>
    <organismsDiffer>false</organismsDiffer>
    <experiments>3</experiments>
</comment>
<comment type="subcellular location">
    <molecule>Isoform IL15-S48AA</molecule>
    <subcellularLocation>
        <location>Secreted</location>
    </subcellularLocation>
</comment>
<comment type="subcellular location">
    <molecule>Isoform IL15-S21AA</molecule>
    <subcellularLocation>
        <location>Cytoplasm</location>
    </subcellularLocation>
    <subcellularLocation>
        <location>Nucleus</location>
    </subcellularLocation>
    <text>IL15-S21AA is not secreted, but rather is stored intracellularly, appearing in the nucleus and cytoplasmic components.</text>
</comment>
<comment type="alternative products">
    <event type="alternative splicing"/>
    <isoform>
        <id>P40933-1</id>
        <name>IL15-S48AA</name>
        <sequence type="displayed"/>
    </isoform>
    <isoform>
        <id>P40933-2</id>
        <name>IL15-S21AA</name>
        <sequence type="described" ref="VSP_002660"/>
    </isoform>
</comment>
<comment type="tissue specificity">
    <text>Most abundant in placenta and skeletal muscle. It is also detected in the heart, lung, liver and kidney. IL15-S21AA is preferentially expressed in tissues such as testis and thymus.</text>
</comment>
<comment type="induction">
    <text evidence="3">By interferon-gamma.</text>
</comment>
<comment type="similarity">
    <text evidence="17">Belongs to the IL-15/IL-21 family.</text>
</comment>
<comment type="sequence caution" evidence="17">
    <conflict type="miscellaneous discrepancy">
        <sequence resource="EMBL-CDS" id="CAA71044"/>
    </conflict>
    <text>Man-made cDNA with a signal peptide sequence to increase protein secretion (substitution with a signal peptide derived from the mouse IgV kappa chain).</text>
</comment>
<comment type="online information" name="Wikipedia">
    <link uri="https://en.wikipedia.org/wiki/Interleukin_15"/>
    <text>Interleukin-15 entry</text>
</comment>
<proteinExistence type="evidence at protein level"/>
<evidence type="ECO:0000250" key="1">
    <source>
        <dbReference type="UniProtKB" id="P48346"/>
    </source>
</evidence>
<evidence type="ECO:0000255" key="2"/>
<evidence type="ECO:0000269" key="3">
    <source>
    </source>
</evidence>
<evidence type="ECO:0000269" key="4">
    <source>
    </source>
</evidence>
<evidence type="ECO:0000269" key="5">
    <source>
    </source>
</evidence>
<evidence type="ECO:0000269" key="6">
    <source>
    </source>
</evidence>
<evidence type="ECO:0000269" key="7">
    <source>
    </source>
</evidence>
<evidence type="ECO:0000269" key="8">
    <source>
    </source>
</evidence>
<evidence type="ECO:0000269" key="9">
    <source>
    </source>
</evidence>
<evidence type="ECO:0000269" key="10">
    <source>
    </source>
</evidence>
<evidence type="ECO:0000303" key="11">
    <source>
    </source>
</evidence>
<evidence type="ECO:0000303" key="12">
    <source>
    </source>
</evidence>
<evidence type="ECO:0000303" key="13">
    <source>
    </source>
</evidence>
<evidence type="ECO:0000303" key="14">
    <source>
    </source>
</evidence>
<evidence type="ECO:0000303" key="15">
    <source ref="6"/>
</evidence>
<evidence type="ECO:0000303" key="16">
    <source ref="8"/>
</evidence>
<evidence type="ECO:0000305" key="17"/>
<evidence type="ECO:0007744" key="18">
    <source>
        <dbReference type="PDB" id="4GS7"/>
    </source>
</evidence>
<evidence type="ECO:0007829" key="19">
    <source>
        <dbReference type="PDB" id="2Z3Q"/>
    </source>
</evidence>